<sequence length="148" mass="16883">MLRLLSKRFYCKIATKSNEKATKLYFKQLTHPTKVPQTPVDAEFPDTSASEIQIDTKTIQLLERLSLVDLDSERALATLKSSIQFADKIAHINTDHVRPLYTVLEHQQLQLRNDQVTEGDCRAEVLQNAKVTDEDYYVSPPGNIPLEQ</sequence>
<keyword id="KW-0067">ATP-binding</keyword>
<keyword id="KW-0436">Ligase</keyword>
<keyword id="KW-0496">Mitochondrion</keyword>
<keyword id="KW-0547">Nucleotide-binding</keyword>
<keyword id="KW-0648">Protein biosynthesis</keyword>
<keyword id="KW-1185">Reference proteome</keyword>
<comment type="function">
    <text evidence="1">Allows the formation of correctly charged Gln-tRNA(Gln) through the transamidation of misacylated Glu-tRNA(Gln) in the mitochondria. The reaction takes place in the presence of glutamine and ATP through an activated gamma-phospho-Glu-tRNA(Gln).</text>
</comment>
<comment type="catalytic activity">
    <reaction evidence="1">
        <text>L-glutamyl-tRNA(Gln) + L-glutamine + ATP + H2O = L-glutaminyl-tRNA(Gln) + L-glutamate + ADP + phosphate + H(+)</text>
        <dbReference type="Rhea" id="RHEA:17521"/>
        <dbReference type="Rhea" id="RHEA-COMP:9681"/>
        <dbReference type="Rhea" id="RHEA-COMP:9684"/>
        <dbReference type="ChEBI" id="CHEBI:15377"/>
        <dbReference type="ChEBI" id="CHEBI:15378"/>
        <dbReference type="ChEBI" id="CHEBI:29985"/>
        <dbReference type="ChEBI" id="CHEBI:30616"/>
        <dbReference type="ChEBI" id="CHEBI:43474"/>
        <dbReference type="ChEBI" id="CHEBI:58359"/>
        <dbReference type="ChEBI" id="CHEBI:78520"/>
        <dbReference type="ChEBI" id="CHEBI:78521"/>
        <dbReference type="ChEBI" id="CHEBI:456216"/>
    </reaction>
</comment>
<comment type="subunit">
    <text evidence="1">Subunit of the heterotrimeric GatCAB amidotransferase (AdT) complex, composed of A, B and C subunits.</text>
</comment>
<comment type="subcellular location">
    <subcellularLocation>
        <location evidence="1">Mitochondrion</location>
    </subcellularLocation>
</comment>
<comment type="miscellaneous">
    <text evidence="1">This protein may be expected to contain an N-terminal transit peptide but none has been predicted.</text>
</comment>
<comment type="similarity">
    <text evidence="1">Belongs to the GatC family.</text>
</comment>
<gene>
    <name type="ORF">GM15071</name>
</gene>
<name>GATC_DROSE</name>
<protein>
    <recommendedName>
        <fullName evidence="1">Glutamyl-tRNA(Gln) amidotransferase subunit C, mitochondrial</fullName>
        <shortName evidence="1">Glu-AdT subunit C</shortName>
        <ecNumber evidence="1">6.3.5.-</ecNumber>
    </recommendedName>
</protein>
<proteinExistence type="inferred from homology"/>
<reference key="1">
    <citation type="journal article" date="2007" name="Nature">
        <title>Evolution of genes and genomes on the Drosophila phylogeny.</title>
        <authorList>
            <consortium name="Drosophila 12 genomes consortium"/>
        </authorList>
    </citation>
    <scope>NUCLEOTIDE SEQUENCE [LARGE SCALE GENOMIC DNA]</scope>
    <source>
        <strain>Rob3c / Tucson 14021-0248.25</strain>
    </source>
</reference>
<accession>B4HXA6</accession>
<organism>
    <name type="scientific">Drosophila sechellia</name>
    <name type="common">Fruit fly</name>
    <dbReference type="NCBI Taxonomy" id="7238"/>
    <lineage>
        <taxon>Eukaryota</taxon>
        <taxon>Metazoa</taxon>
        <taxon>Ecdysozoa</taxon>
        <taxon>Arthropoda</taxon>
        <taxon>Hexapoda</taxon>
        <taxon>Insecta</taxon>
        <taxon>Pterygota</taxon>
        <taxon>Neoptera</taxon>
        <taxon>Endopterygota</taxon>
        <taxon>Diptera</taxon>
        <taxon>Brachycera</taxon>
        <taxon>Muscomorpha</taxon>
        <taxon>Ephydroidea</taxon>
        <taxon>Drosophilidae</taxon>
        <taxon>Drosophila</taxon>
        <taxon>Sophophora</taxon>
    </lineage>
</organism>
<feature type="chain" id="PRO_0000413307" description="Glutamyl-tRNA(Gln) amidotransferase subunit C, mitochondrial">
    <location>
        <begin position="1"/>
        <end position="148"/>
    </location>
</feature>
<dbReference type="EC" id="6.3.5.-" evidence="1"/>
<dbReference type="EMBL" id="CH480818">
    <property type="protein sequence ID" value="EDW51686.1"/>
    <property type="molecule type" value="Genomic_DNA"/>
</dbReference>
<dbReference type="SMR" id="B4HXA6"/>
<dbReference type="STRING" id="7238.B4HXA6"/>
<dbReference type="EnsemblMetazoa" id="FBtr0198056">
    <property type="protein sequence ID" value="FBpp0196548"/>
    <property type="gene ID" value="FBgn0169991"/>
</dbReference>
<dbReference type="EnsemblMetazoa" id="XM_002035727.2">
    <property type="protein sequence ID" value="XP_002035763.1"/>
    <property type="gene ID" value="LOC6611207"/>
</dbReference>
<dbReference type="GeneID" id="6611207"/>
<dbReference type="KEGG" id="dse:6611207"/>
<dbReference type="CTD" id="283459"/>
<dbReference type="HOGENOM" id="CLU_105899_0_1_1"/>
<dbReference type="OMA" id="RCAKRTD"/>
<dbReference type="OrthoDB" id="20162at7215"/>
<dbReference type="PhylomeDB" id="B4HXA6"/>
<dbReference type="Proteomes" id="UP000001292">
    <property type="component" value="Unassembled WGS sequence"/>
</dbReference>
<dbReference type="GO" id="GO:0030956">
    <property type="term" value="C:glutamyl-tRNA(Gln) amidotransferase complex"/>
    <property type="evidence" value="ECO:0007669"/>
    <property type="project" value="UniProtKB-UniRule"/>
</dbReference>
<dbReference type="GO" id="GO:0005739">
    <property type="term" value="C:mitochondrion"/>
    <property type="evidence" value="ECO:0007669"/>
    <property type="project" value="UniProtKB-SubCell"/>
</dbReference>
<dbReference type="GO" id="GO:0005524">
    <property type="term" value="F:ATP binding"/>
    <property type="evidence" value="ECO:0007669"/>
    <property type="project" value="UniProtKB-KW"/>
</dbReference>
<dbReference type="GO" id="GO:0050567">
    <property type="term" value="F:glutaminyl-tRNA synthase (glutamine-hydrolyzing) activity"/>
    <property type="evidence" value="ECO:0007669"/>
    <property type="project" value="UniProtKB-UniRule"/>
</dbReference>
<dbReference type="GO" id="GO:0070681">
    <property type="term" value="P:glutaminyl-tRNAGln biosynthesis via transamidation"/>
    <property type="evidence" value="ECO:0007669"/>
    <property type="project" value="UniProtKB-UniRule"/>
</dbReference>
<dbReference type="GO" id="GO:0032543">
    <property type="term" value="P:mitochondrial translation"/>
    <property type="evidence" value="ECO:0007669"/>
    <property type="project" value="UniProtKB-UniRule"/>
</dbReference>
<dbReference type="GO" id="GO:0006450">
    <property type="term" value="P:regulation of translational fidelity"/>
    <property type="evidence" value="ECO:0007669"/>
    <property type="project" value="InterPro"/>
</dbReference>
<dbReference type="HAMAP" id="MF_00122">
    <property type="entry name" value="GatC"/>
    <property type="match status" value="1"/>
</dbReference>
<dbReference type="InterPro" id="IPR036113">
    <property type="entry name" value="Asp/Glu-ADT_sf_sub_c"/>
</dbReference>
<dbReference type="InterPro" id="IPR003837">
    <property type="entry name" value="GatC"/>
</dbReference>
<dbReference type="NCBIfam" id="TIGR00135">
    <property type="entry name" value="gatC"/>
    <property type="match status" value="1"/>
</dbReference>
<dbReference type="PANTHER" id="PTHR15004">
    <property type="entry name" value="GLUTAMYL-TRNA(GLN) AMIDOTRANSFERASE SUBUNIT C, MITOCHONDRIAL"/>
    <property type="match status" value="1"/>
</dbReference>
<dbReference type="PANTHER" id="PTHR15004:SF0">
    <property type="entry name" value="GLUTAMYL-TRNA(GLN) AMIDOTRANSFERASE SUBUNIT C, MITOCHONDRIAL"/>
    <property type="match status" value="1"/>
</dbReference>
<dbReference type="Pfam" id="PF02686">
    <property type="entry name" value="GatC"/>
    <property type="match status" value="1"/>
</dbReference>
<dbReference type="SUPFAM" id="SSF141000">
    <property type="entry name" value="Glu-tRNAGln amidotransferase C subunit"/>
    <property type="match status" value="1"/>
</dbReference>
<evidence type="ECO:0000255" key="1">
    <source>
        <dbReference type="HAMAP-Rule" id="MF_03149"/>
    </source>
</evidence>